<evidence type="ECO:0000250" key="1">
    <source>
        <dbReference type="UniProtKB" id="A9C3N6"/>
    </source>
</evidence>
<evidence type="ECO:0000250" key="2">
    <source>
        <dbReference type="UniProtKB" id="Q96C57"/>
    </source>
</evidence>
<evidence type="ECO:0000256" key="3">
    <source>
        <dbReference type="SAM" id="MobiDB-lite"/>
    </source>
</evidence>
<evidence type="ECO:0000305" key="4"/>
<protein>
    <recommendedName>
        <fullName evidence="1">Protein CUSTOS</fullName>
    </recommendedName>
</protein>
<comment type="function">
    <text evidence="1">Plays a role in the regulation of Wnt signaling pathway during early development.</text>
</comment>
<comment type="subcellular location">
    <subcellularLocation>
        <location evidence="1">Nucleus envelope</location>
    </subcellularLocation>
</comment>
<comment type="similarity">
    <text evidence="4">Belongs to the CUSTOS family.</text>
</comment>
<reference key="1">
    <citation type="journal article" date="2005" name="BMC Genomics">
        <title>Characterization of 954 bovine full-CDS cDNA sequences.</title>
        <authorList>
            <person name="Harhay G.P."/>
            <person name="Sonstegard T.S."/>
            <person name="Keele J.W."/>
            <person name="Heaton M.P."/>
            <person name="Clawson M.L."/>
            <person name="Snelling W.M."/>
            <person name="Wiedmann R.T."/>
            <person name="Van Tassell C.P."/>
            <person name="Smith T.P.L."/>
        </authorList>
    </citation>
    <scope>NUCLEOTIDE SEQUENCE [LARGE SCALE MRNA]</scope>
</reference>
<gene>
    <name evidence="1" type="primary">CUSTOS</name>
</gene>
<name>CSTOS_BOVIN</name>
<dbReference type="EMBL" id="BT021875">
    <property type="protein sequence ID" value="AAX46722.1"/>
    <property type="molecule type" value="mRNA"/>
</dbReference>
<dbReference type="EMBL" id="BT021897">
    <property type="protein sequence ID" value="AAX46744.1"/>
    <property type="molecule type" value="mRNA"/>
</dbReference>
<dbReference type="EMBL" id="BT029879">
    <property type="protein sequence ID" value="ABM21557.1"/>
    <property type="molecule type" value="mRNA"/>
</dbReference>
<dbReference type="RefSeq" id="NP_001026923.1">
    <property type="nucleotide sequence ID" value="NM_001031753.1"/>
</dbReference>
<dbReference type="RefSeq" id="XP_005217824.1">
    <property type="nucleotide sequence ID" value="XM_005217767.3"/>
</dbReference>
<dbReference type="SMR" id="Q58CQ0"/>
<dbReference type="FunCoup" id="Q58CQ0">
    <property type="interactions" value="2056"/>
</dbReference>
<dbReference type="STRING" id="9913.ENSBTAP00000029052"/>
<dbReference type="PaxDb" id="9913-ENSBTAP00000029052"/>
<dbReference type="GeneID" id="507351"/>
<dbReference type="KEGG" id="bta:507351"/>
<dbReference type="CTD" id="507351"/>
<dbReference type="eggNOG" id="ENOG502S3AI">
    <property type="taxonomic scope" value="Eukaryota"/>
</dbReference>
<dbReference type="InParanoid" id="Q58CQ0"/>
<dbReference type="OrthoDB" id="10053459at2759"/>
<dbReference type="Proteomes" id="UP000009136">
    <property type="component" value="Unplaced"/>
</dbReference>
<dbReference type="GO" id="GO:0005635">
    <property type="term" value="C:nuclear envelope"/>
    <property type="evidence" value="ECO:0007669"/>
    <property type="project" value="UniProtKB-SubCell"/>
</dbReference>
<dbReference type="GO" id="GO:0030178">
    <property type="term" value="P:negative regulation of Wnt signaling pathway"/>
    <property type="evidence" value="ECO:0000318"/>
    <property type="project" value="GO_Central"/>
</dbReference>
<dbReference type="GO" id="GO:0060061">
    <property type="term" value="P:Spemann organizer formation"/>
    <property type="evidence" value="ECO:0000318"/>
    <property type="project" value="GO_Central"/>
</dbReference>
<dbReference type="GO" id="GO:0016055">
    <property type="term" value="P:Wnt signaling pathway"/>
    <property type="evidence" value="ECO:0007669"/>
    <property type="project" value="UniProtKB-KW"/>
</dbReference>
<dbReference type="InterPro" id="IPR026694">
    <property type="entry name" value="CUSTOS"/>
</dbReference>
<dbReference type="PANTHER" id="PTHR14482">
    <property type="entry name" value="CHROMOSOME 12 ORF 43 HOMOLOG"/>
    <property type="match status" value="1"/>
</dbReference>
<dbReference type="PANTHER" id="PTHR14482:SF0">
    <property type="entry name" value="PROTEIN CUSTOS"/>
    <property type="match status" value="1"/>
</dbReference>
<dbReference type="Pfam" id="PF23999">
    <property type="entry name" value="CUSTOS"/>
    <property type="match status" value="1"/>
</dbReference>
<keyword id="KW-0217">Developmental protein</keyword>
<keyword id="KW-0539">Nucleus</keyword>
<keyword id="KW-0597">Phosphoprotein</keyword>
<keyword id="KW-1185">Reference proteome</keyword>
<keyword id="KW-0879">Wnt signaling pathway</keyword>
<proteinExistence type="evidence at transcript level"/>
<sequence>MSDLESSSSSSSDEEELERCREAALPAWGLEQRPRGPEKPGVDATNAKLPANQPSLMHKVDEHEQDGNELQTTPEFRAHVAKKLGALLDSSITISEIVKEPRKSEVQQGALEDDGFRLFFTSIPGGPEKEAAPQPCRKRLPSSSSSDDGDEELRRCREAAVSASDILQESAIHGHVSVEKKKKRKLKKKAKKEDSADVAATATSKAEVGRQEKESAQLNGDQAPPGTKKKKRKKKTKKASEASLSPPTKSAAAVPSN</sequence>
<accession>Q58CQ0</accession>
<accession>Q58CS2</accession>
<feature type="chain" id="PRO_0000276849" description="Protein CUSTOS">
    <location>
        <begin position="1"/>
        <end position="257"/>
    </location>
</feature>
<feature type="region of interest" description="Disordered" evidence="3">
    <location>
        <begin position="1"/>
        <end position="72"/>
    </location>
</feature>
<feature type="region of interest" description="Disordered" evidence="3">
    <location>
        <begin position="120"/>
        <end position="157"/>
    </location>
</feature>
<feature type="region of interest" description="Disordered" evidence="3">
    <location>
        <begin position="170"/>
        <end position="257"/>
    </location>
</feature>
<feature type="short sequence motif" description="Nucleolar localization signal (NLS)" evidence="1">
    <location>
        <begin position="228"/>
        <end position="236"/>
    </location>
</feature>
<feature type="compositionally biased region" description="Low complexity" evidence="3">
    <location>
        <begin position="1"/>
        <end position="11"/>
    </location>
</feature>
<feature type="compositionally biased region" description="Basic and acidic residues" evidence="3">
    <location>
        <begin position="32"/>
        <end position="41"/>
    </location>
</feature>
<feature type="compositionally biased region" description="Basic residues" evidence="3">
    <location>
        <begin position="180"/>
        <end position="190"/>
    </location>
</feature>
<feature type="compositionally biased region" description="Basic residues" evidence="3">
    <location>
        <begin position="227"/>
        <end position="237"/>
    </location>
</feature>
<feature type="modified residue" description="Phosphoserine" evidence="2">
    <location>
        <position position="55"/>
    </location>
</feature>
<feature type="modified residue" description="Phosphothreonine" evidence="2">
    <location>
        <position position="73"/>
    </location>
</feature>
<feature type="sequence conflict" description="In Ref. 1; AAX46722/ABM21557." evidence="4" ref="1">
    <original>M</original>
    <variation>R</variation>
    <location>
        <position position="57"/>
    </location>
</feature>
<feature type="sequence conflict" description="In Ref. 1; AAX46722/ABM21557." evidence="4" ref="1">
    <location>
        <position position="146"/>
    </location>
</feature>
<feature type="sequence conflict" description="In Ref. 1; AAX46722/ABM21557." evidence="4" ref="1">
    <original>T</original>
    <variation>A</variation>
    <location>
        <position position="201"/>
    </location>
</feature>
<feature type="sequence conflict" description="In Ref. 1; AAX46722/ABM21557." evidence="4" ref="1">
    <original>E</original>
    <variation>A</variation>
    <location>
        <position position="207"/>
    </location>
</feature>
<feature type="sequence conflict" description="In Ref. 1; AAX46722/ABM21557." evidence="4" ref="1">
    <original>L</original>
    <variation>P</variation>
    <location>
        <position position="244"/>
    </location>
</feature>
<organism>
    <name type="scientific">Bos taurus</name>
    <name type="common">Bovine</name>
    <dbReference type="NCBI Taxonomy" id="9913"/>
    <lineage>
        <taxon>Eukaryota</taxon>
        <taxon>Metazoa</taxon>
        <taxon>Chordata</taxon>
        <taxon>Craniata</taxon>
        <taxon>Vertebrata</taxon>
        <taxon>Euteleostomi</taxon>
        <taxon>Mammalia</taxon>
        <taxon>Eutheria</taxon>
        <taxon>Laurasiatheria</taxon>
        <taxon>Artiodactyla</taxon>
        <taxon>Ruminantia</taxon>
        <taxon>Pecora</taxon>
        <taxon>Bovidae</taxon>
        <taxon>Bovinae</taxon>
        <taxon>Bos</taxon>
    </lineage>
</organism>